<gene>
    <name type="primary">TAS2R19</name>
    <name type="synonym">TAS2R48</name>
</gene>
<name>T2R19_PANPA</name>
<dbReference type="EMBL" id="AY677152">
    <property type="protein sequence ID" value="AAV28580.1"/>
    <property type="molecule type" value="Genomic_DNA"/>
</dbReference>
<dbReference type="SMR" id="Q5Y4Z5"/>
<dbReference type="STRING" id="9597.ENSPPAP00000004877"/>
<dbReference type="GlyCosmos" id="Q5Y4Z5">
    <property type="glycosylation" value="1 site, No reported glycans"/>
</dbReference>
<dbReference type="eggNOG" id="ENOG502TE6U">
    <property type="taxonomic scope" value="Eukaryota"/>
</dbReference>
<dbReference type="Proteomes" id="UP000240080">
    <property type="component" value="Unplaced"/>
</dbReference>
<dbReference type="GO" id="GO:0005886">
    <property type="term" value="C:plasma membrane"/>
    <property type="evidence" value="ECO:0007669"/>
    <property type="project" value="UniProtKB-ARBA"/>
</dbReference>
<dbReference type="GO" id="GO:0033038">
    <property type="term" value="F:bitter taste receptor activity"/>
    <property type="evidence" value="ECO:0007669"/>
    <property type="project" value="InterPro"/>
</dbReference>
<dbReference type="GO" id="GO:0004930">
    <property type="term" value="F:G protein-coupled receptor activity"/>
    <property type="evidence" value="ECO:0007669"/>
    <property type="project" value="UniProtKB-KW"/>
</dbReference>
<dbReference type="CDD" id="cd15027">
    <property type="entry name" value="7tm_TAS2R43-like"/>
    <property type="match status" value="1"/>
</dbReference>
<dbReference type="FunFam" id="1.20.1070.10:FF:000042">
    <property type="entry name" value="Taste receptor type 2 member 7"/>
    <property type="match status" value="1"/>
</dbReference>
<dbReference type="Gene3D" id="1.20.1070.10">
    <property type="entry name" value="Rhodopsin 7-helix transmembrane proteins"/>
    <property type="match status" value="1"/>
</dbReference>
<dbReference type="InterPro" id="IPR007960">
    <property type="entry name" value="TAS2R"/>
</dbReference>
<dbReference type="PANTHER" id="PTHR11394">
    <property type="entry name" value="TASTE RECEPTOR TYPE 2"/>
    <property type="match status" value="1"/>
</dbReference>
<dbReference type="PANTHER" id="PTHR11394:SF139">
    <property type="entry name" value="TASTE RECEPTOR TYPE 2 MEMBER 19-RELATED"/>
    <property type="match status" value="1"/>
</dbReference>
<dbReference type="Pfam" id="PF05296">
    <property type="entry name" value="TAS2R"/>
    <property type="match status" value="1"/>
</dbReference>
<dbReference type="SUPFAM" id="SSF81321">
    <property type="entry name" value="Family A G protein-coupled receptor-like"/>
    <property type="match status" value="1"/>
</dbReference>
<feature type="chain" id="PRO_0000082329" description="Taste receptor type 2 member 19">
    <location>
        <begin position="1"/>
        <end position="299"/>
    </location>
</feature>
<feature type="topological domain" description="Extracellular" evidence="2">
    <location>
        <position position="1"/>
    </location>
</feature>
<feature type="transmembrane region" description="Helical; Name=1" evidence="2">
    <location>
        <begin position="2"/>
        <end position="22"/>
    </location>
</feature>
<feature type="topological domain" description="Cytoplasmic" evidence="2">
    <location>
        <begin position="23"/>
        <end position="55"/>
    </location>
</feature>
<feature type="transmembrane region" description="Helical; Name=2" evidence="2">
    <location>
        <begin position="56"/>
        <end position="76"/>
    </location>
</feature>
<feature type="topological domain" description="Extracellular" evidence="2">
    <location>
        <begin position="77"/>
        <end position="87"/>
    </location>
</feature>
<feature type="transmembrane region" description="Helical; Name=3" evidence="2">
    <location>
        <begin position="88"/>
        <end position="108"/>
    </location>
</feature>
<feature type="topological domain" description="Cytoplasmic" evidence="2">
    <location>
        <begin position="109"/>
        <end position="127"/>
    </location>
</feature>
<feature type="transmembrane region" description="Helical; Name=4" evidence="2">
    <location>
        <begin position="128"/>
        <end position="148"/>
    </location>
</feature>
<feature type="topological domain" description="Extracellular" evidence="2">
    <location>
        <begin position="149"/>
        <end position="181"/>
    </location>
</feature>
<feature type="transmembrane region" description="Helical; Name=5" evidence="2">
    <location>
        <begin position="182"/>
        <end position="202"/>
    </location>
</feature>
<feature type="topological domain" description="Cytoplasmic" evidence="2">
    <location>
        <begin position="203"/>
        <end position="226"/>
    </location>
</feature>
<feature type="transmembrane region" description="Helical; Name=6" evidence="2">
    <location>
        <begin position="227"/>
        <end position="247"/>
    </location>
</feature>
<feature type="topological domain" description="Extracellular" evidence="2">
    <location>
        <begin position="248"/>
        <end position="259"/>
    </location>
</feature>
<feature type="transmembrane region" description="Helical; Name=7" evidence="2">
    <location>
        <begin position="260"/>
        <end position="280"/>
    </location>
</feature>
<feature type="topological domain" description="Cytoplasmic" evidence="2">
    <location>
        <begin position="281"/>
        <end position="299"/>
    </location>
</feature>
<feature type="glycosylation site" description="N-linked (GlcNAc...) asparagine" evidence="2">
    <location>
        <position position="161"/>
    </location>
</feature>
<comment type="function">
    <text evidence="1">Receptor that may play a role in the perception of bitterness and is gustducin-linked. May play a role in sensing the chemical composition of the gastrointestinal content. The activity of this receptor may stimulate alpha gustducin, mediate PLC-beta-2 activation and lead to the gating of TRPM5 (By similarity).</text>
</comment>
<comment type="subcellular location">
    <subcellularLocation>
        <location>Membrane</location>
        <topology>Multi-pass membrane protein</topology>
    </subcellularLocation>
</comment>
<comment type="miscellaneous">
    <text>Most taste cells may be activated by a limited number of bitter compounds; individual taste cells can discriminate among bitter stimuli.</text>
</comment>
<comment type="similarity">
    <text evidence="3">Belongs to the G-protein coupled receptor T2R family.</text>
</comment>
<sequence>MMCFLLIILSILVVFAFVLGNFSNGFIALVNVIDWVNTRKISSADQILTALVVSRIGLLWVMLFLWYATVFNSALYGLEVRIVASNAWAVMNHFSIWLAASLSIFCLLKIANFSNLIFLHLKKRIKSVVLVILLGPLVFLICNLAVITMDERVWTKEYEGNVTWKIKLRNAIQLSSLTVTTLANLIPFTLSLICFLLLICSLCKHLKKMRLHSKGSQDPSTKVHIKALQTVTSFLMLFAIYFLCIITSTWNLRTQQSKLVLLLCQTVAIMYPSFHSFILIMGSRKLKQTFLSVLWQMTR</sequence>
<keyword id="KW-0297">G-protein coupled receptor</keyword>
<keyword id="KW-0325">Glycoprotein</keyword>
<keyword id="KW-0472">Membrane</keyword>
<keyword id="KW-0675">Receptor</keyword>
<keyword id="KW-1185">Reference proteome</keyword>
<keyword id="KW-0716">Sensory transduction</keyword>
<keyword id="KW-0919">Taste</keyword>
<keyword id="KW-0807">Transducer</keyword>
<keyword id="KW-0812">Transmembrane</keyword>
<keyword id="KW-1133">Transmembrane helix</keyword>
<accession>Q5Y4Z5</accession>
<reference key="1">
    <citation type="journal article" date="2004" name="Proc. Natl. Acad. Sci. U.S.A.">
        <title>Divergence of T2R chemosensory receptor families in humans, bonobos, and chimpanzees.</title>
        <authorList>
            <person name="Parry C.M."/>
            <person name="Erkner A."/>
            <person name="le Coutre J."/>
        </authorList>
    </citation>
    <scope>NUCLEOTIDE SEQUENCE [GENOMIC DNA]</scope>
</reference>
<evidence type="ECO:0000250" key="1"/>
<evidence type="ECO:0000255" key="2"/>
<evidence type="ECO:0000305" key="3"/>
<organism>
    <name type="scientific">Pan paniscus</name>
    <name type="common">Pygmy chimpanzee</name>
    <name type="synonym">Bonobo</name>
    <dbReference type="NCBI Taxonomy" id="9597"/>
    <lineage>
        <taxon>Eukaryota</taxon>
        <taxon>Metazoa</taxon>
        <taxon>Chordata</taxon>
        <taxon>Craniata</taxon>
        <taxon>Vertebrata</taxon>
        <taxon>Euteleostomi</taxon>
        <taxon>Mammalia</taxon>
        <taxon>Eutheria</taxon>
        <taxon>Euarchontoglires</taxon>
        <taxon>Primates</taxon>
        <taxon>Haplorrhini</taxon>
        <taxon>Catarrhini</taxon>
        <taxon>Hominidae</taxon>
        <taxon>Pan</taxon>
    </lineage>
</organism>
<proteinExistence type="inferred from homology"/>
<protein>
    <recommendedName>
        <fullName>Taste receptor type 2 member 19</fullName>
    </recommendedName>
    <alternativeName>
        <fullName>Taste receptor type 2 member 48</fullName>
        <shortName>T2R48</shortName>
    </alternativeName>
</protein>